<name>YFG7_YEAST</name>
<organism>
    <name type="scientific">Saccharomyces cerevisiae (strain ATCC 204508 / S288c)</name>
    <name type="common">Baker's yeast</name>
    <dbReference type="NCBI Taxonomy" id="559292"/>
    <lineage>
        <taxon>Eukaryota</taxon>
        <taxon>Fungi</taxon>
        <taxon>Dikarya</taxon>
        <taxon>Ascomycota</taxon>
        <taxon>Saccharomycotina</taxon>
        <taxon>Saccharomycetes</taxon>
        <taxon>Saccharomycetales</taxon>
        <taxon>Saccharomycetaceae</taxon>
        <taxon>Saccharomyces</taxon>
    </lineage>
</organism>
<protein>
    <recommendedName>
        <fullName>Uncharacterized membrane protein YFL067W</fullName>
    </recommendedName>
</protein>
<proteinExistence type="evidence at protein level"/>
<feature type="chain" id="PRO_0000202667" description="Uncharacterized membrane protein YFL067W">
    <location>
        <begin position="1"/>
        <end position="175"/>
    </location>
</feature>
<feature type="topological domain" description="Extracellular" evidence="1">
    <location>
        <begin position="1"/>
        <end position="2"/>
    </location>
</feature>
<feature type="transmembrane region" description="Helical" evidence="1">
    <location>
        <begin position="3"/>
        <end position="23"/>
    </location>
</feature>
<feature type="topological domain" description="Cytoplasmic" evidence="1">
    <location>
        <begin position="24"/>
        <end position="151"/>
    </location>
</feature>
<feature type="transmembrane region" description="Helical" evidence="1">
    <location>
        <begin position="152"/>
        <end position="172"/>
    </location>
</feature>
<feature type="topological domain" description="Extracellular" evidence="1">
    <location>
        <begin position="173"/>
        <end position="175"/>
    </location>
</feature>
<feature type="region of interest" description="Disordered" evidence="2">
    <location>
        <begin position="26"/>
        <end position="88"/>
    </location>
</feature>
<feature type="compositionally biased region" description="Polar residues" evidence="2">
    <location>
        <begin position="59"/>
        <end position="78"/>
    </location>
</feature>
<sequence>MESIILSIAIFIGVLLGTSVGAGSGSSISPDVDAGSGSRTSPDVDAGSGSRISAGVGTFSGSSTSPDVDAGSGSSTSPDVGAGSGSSISAGVGSRIGTGIGSRIGTGIGTGIGSRISTSIGSRISPDVGTSSGNRISTGVSTGISTTMNARVAVLITAAILSAPVTAIALLEARR</sequence>
<gene>
    <name type="ordered locus">YFL067W</name>
</gene>
<keyword id="KW-0472">Membrane</keyword>
<keyword id="KW-1185">Reference proteome</keyword>
<keyword id="KW-0677">Repeat</keyword>
<keyword id="KW-0812">Transmembrane</keyword>
<keyword id="KW-1133">Transmembrane helix</keyword>
<accession>P43537</accession>
<accession>D6VTG4</accession>
<dbReference type="EMBL" id="D50617">
    <property type="protein sequence ID" value="BAA09174.1"/>
    <property type="molecule type" value="Genomic_DNA"/>
</dbReference>
<dbReference type="EMBL" id="BK006940">
    <property type="protein sequence ID" value="DAA12374.1"/>
    <property type="molecule type" value="Genomic_DNA"/>
</dbReference>
<dbReference type="PIR" id="S56188">
    <property type="entry name" value="S56188"/>
</dbReference>
<dbReference type="RefSeq" id="NP_116588.1">
    <property type="nucleotide sequence ID" value="NM_001179900.1"/>
</dbReference>
<dbReference type="BioGRID" id="31081">
    <property type="interactions" value="2"/>
</dbReference>
<dbReference type="DIP" id="DIP-5589N"/>
<dbReference type="FunCoup" id="P43537">
    <property type="interactions" value="38"/>
</dbReference>
<dbReference type="IntAct" id="P43537">
    <property type="interactions" value="1"/>
</dbReference>
<dbReference type="STRING" id="4932.YFL067W"/>
<dbReference type="PaxDb" id="4932-YFL067W"/>
<dbReference type="TopDownProteomics" id="P43537"/>
<dbReference type="EnsemblFungi" id="YFL067W_mRNA">
    <property type="protein sequence ID" value="YFL067W"/>
    <property type="gene ID" value="YFL067W"/>
</dbReference>
<dbReference type="GeneID" id="850477"/>
<dbReference type="KEGG" id="sce:YFL067W"/>
<dbReference type="AGR" id="SGD:S000001827"/>
<dbReference type="SGD" id="S000001827">
    <property type="gene designation" value="YFL067W"/>
</dbReference>
<dbReference type="VEuPathDB" id="FungiDB:YFL067W"/>
<dbReference type="GeneTree" id="ENSGT00940000178355"/>
<dbReference type="HOGENOM" id="CLU_106419_0_0_1"/>
<dbReference type="InParanoid" id="P43537"/>
<dbReference type="OrthoDB" id="410307at2759"/>
<dbReference type="BioCyc" id="YEAST:G3O-30401-MONOMER"/>
<dbReference type="BioGRID-ORCS" id="850477">
    <property type="hits" value="0 hits in 10 CRISPR screens"/>
</dbReference>
<dbReference type="PRO" id="PR:P43537"/>
<dbReference type="Proteomes" id="UP000002311">
    <property type="component" value="Chromosome VI"/>
</dbReference>
<dbReference type="RNAct" id="P43537">
    <property type="molecule type" value="protein"/>
</dbReference>
<dbReference type="GO" id="GO:0016020">
    <property type="term" value="C:membrane"/>
    <property type="evidence" value="ECO:0007669"/>
    <property type="project" value="UniProtKB-SubCell"/>
</dbReference>
<evidence type="ECO:0000255" key="1"/>
<evidence type="ECO:0000256" key="2">
    <source>
        <dbReference type="SAM" id="MobiDB-lite"/>
    </source>
</evidence>
<reference key="1">
    <citation type="journal article" date="1995" name="Nat. Genet.">
        <title>Analysis of the nucleotide sequence of chromosome VI from Saccharomyces cerevisiae.</title>
        <authorList>
            <person name="Murakami Y."/>
            <person name="Naitou M."/>
            <person name="Hagiwara H."/>
            <person name="Shibata T."/>
            <person name="Ozawa M."/>
            <person name="Sasanuma S."/>
            <person name="Sasanuma M."/>
            <person name="Tsuchiya Y."/>
            <person name="Soeda E."/>
            <person name="Yokoyama K."/>
            <person name="Yamazaki M."/>
            <person name="Tashiro H."/>
            <person name="Eki T."/>
        </authorList>
    </citation>
    <scope>NUCLEOTIDE SEQUENCE [LARGE SCALE GENOMIC DNA]</scope>
    <source>
        <strain>ATCC 204508 / S288c</strain>
    </source>
</reference>
<reference key="2">
    <citation type="journal article" date="2014" name="G3 (Bethesda)">
        <title>The reference genome sequence of Saccharomyces cerevisiae: Then and now.</title>
        <authorList>
            <person name="Engel S.R."/>
            <person name="Dietrich F.S."/>
            <person name="Fisk D.G."/>
            <person name="Binkley G."/>
            <person name="Balakrishnan R."/>
            <person name="Costanzo M.C."/>
            <person name="Dwight S.S."/>
            <person name="Hitz B.C."/>
            <person name="Karra K."/>
            <person name="Nash R.S."/>
            <person name="Weng S."/>
            <person name="Wong E.D."/>
            <person name="Lloyd P."/>
            <person name="Skrzypek M.S."/>
            <person name="Miyasato S.R."/>
            <person name="Simison M."/>
            <person name="Cherry J.M."/>
        </authorList>
    </citation>
    <scope>GENOME REANNOTATION</scope>
    <source>
        <strain>ATCC 204508 / S288c</strain>
    </source>
</reference>
<reference key="3">
    <citation type="journal article" date="2006" name="Proc. Natl. Acad. Sci. U.S.A.">
        <title>A global topology map of the Saccharomyces cerevisiae membrane proteome.</title>
        <authorList>
            <person name="Kim H."/>
            <person name="Melen K."/>
            <person name="Oesterberg M."/>
            <person name="von Heijne G."/>
        </authorList>
    </citation>
    <scope>TOPOLOGY [LARGE SCALE ANALYSIS]</scope>
    <source>
        <strain>ATCC 208353 / W303-1A</strain>
    </source>
</reference>
<comment type="subcellular location">
    <subcellularLocation>
        <location>Membrane</location>
        <topology>Multi-pass membrane protein</topology>
    </subcellularLocation>
</comment>